<reference key="1">
    <citation type="submission" date="2006-05" db="EMBL/GenBank/DDBJ databases">
        <title>Complete sequence of chromosome 2 of Burkholderia cenocepacia AU 1054.</title>
        <authorList>
            <consortium name="US DOE Joint Genome Institute"/>
            <person name="Copeland A."/>
            <person name="Lucas S."/>
            <person name="Lapidus A."/>
            <person name="Barry K."/>
            <person name="Detter J.C."/>
            <person name="Glavina del Rio T."/>
            <person name="Hammon N."/>
            <person name="Israni S."/>
            <person name="Dalin E."/>
            <person name="Tice H."/>
            <person name="Pitluck S."/>
            <person name="Chain P."/>
            <person name="Malfatti S."/>
            <person name="Shin M."/>
            <person name="Vergez L."/>
            <person name="Schmutz J."/>
            <person name="Larimer F."/>
            <person name="Land M."/>
            <person name="Hauser L."/>
            <person name="Kyrpides N."/>
            <person name="Lykidis A."/>
            <person name="LiPuma J.J."/>
            <person name="Konstantinidis K."/>
            <person name="Tiedje J.M."/>
            <person name="Richardson P."/>
        </authorList>
    </citation>
    <scope>NUCLEOTIDE SEQUENCE [LARGE SCALE GENOMIC DNA]</scope>
    <source>
        <strain>AU 1054</strain>
    </source>
</reference>
<dbReference type="EC" id="3.5.4.16" evidence="1"/>
<dbReference type="EMBL" id="CP000379">
    <property type="protein sequence ID" value="ABF79367.1"/>
    <property type="molecule type" value="Genomic_DNA"/>
</dbReference>
<dbReference type="SMR" id="Q1BLY8"/>
<dbReference type="HOGENOM" id="CLU_062816_1_1_4"/>
<dbReference type="UniPathway" id="UPA00848">
    <property type="reaction ID" value="UER00151"/>
</dbReference>
<dbReference type="GO" id="GO:0003934">
    <property type="term" value="F:GTP cyclohydrolase I activity"/>
    <property type="evidence" value="ECO:0007669"/>
    <property type="project" value="UniProtKB-UniRule"/>
</dbReference>
<dbReference type="GO" id="GO:0046654">
    <property type="term" value="P:tetrahydrofolate biosynthetic process"/>
    <property type="evidence" value="ECO:0007669"/>
    <property type="project" value="UniProtKB-UniRule"/>
</dbReference>
<dbReference type="Gene3D" id="3.10.270.10">
    <property type="entry name" value="Urate Oxidase"/>
    <property type="match status" value="1"/>
</dbReference>
<dbReference type="HAMAP" id="MF_01527_B">
    <property type="entry name" value="GTP_cyclohydrol_B"/>
    <property type="match status" value="1"/>
</dbReference>
<dbReference type="InterPro" id="IPR022838">
    <property type="entry name" value="GTP_cyclohydrolase_FolE2"/>
</dbReference>
<dbReference type="InterPro" id="IPR003801">
    <property type="entry name" value="GTP_cyclohydrolase_FolE2/MptA"/>
</dbReference>
<dbReference type="NCBIfam" id="NF010200">
    <property type="entry name" value="PRK13674.1-1"/>
    <property type="match status" value="1"/>
</dbReference>
<dbReference type="PANTHER" id="PTHR36445">
    <property type="entry name" value="GTP CYCLOHYDROLASE MPTA"/>
    <property type="match status" value="1"/>
</dbReference>
<dbReference type="PANTHER" id="PTHR36445:SF1">
    <property type="entry name" value="GTP CYCLOHYDROLASE MPTA"/>
    <property type="match status" value="1"/>
</dbReference>
<dbReference type="Pfam" id="PF02649">
    <property type="entry name" value="GCHY-1"/>
    <property type="match status" value="1"/>
</dbReference>
<gene>
    <name evidence="1" type="primary">folE2-2</name>
    <name type="ordered locus">Bcen_4485</name>
</gene>
<proteinExistence type="inferred from homology"/>
<organism>
    <name type="scientific">Burkholderia orbicola (strain AU 1054)</name>
    <dbReference type="NCBI Taxonomy" id="331271"/>
    <lineage>
        <taxon>Bacteria</taxon>
        <taxon>Pseudomonadati</taxon>
        <taxon>Pseudomonadota</taxon>
        <taxon>Betaproteobacteria</taxon>
        <taxon>Burkholderiales</taxon>
        <taxon>Burkholderiaceae</taxon>
        <taxon>Burkholderia</taxon>
        <taxon>Burkholderia cepacia complex</taxon>
        <taxon>Burkholderia orbicola</taxon>
    </lineage>
</organism>
<accession>Q1BLY8</accession>
<protein>
    <recommendedName>
        <fullName evidence="1">GTP cyclohydrolase FolE2 2</fullName>
        <ecNumber evidence="1">3.5.4.16</ecNumber>
    </recommendedName>
</protein>
<comment type="function">
    <text evidence="1">Converts GTP to 7,8-dihydroneopterin triphosphate.</text>
</comment>
<comment type="catalytic activity">
    <reaction evidence="1">
        <text>GTP + H2O = 7,8-dihydroneopterin 3'-triphosphate + formate + H(+)</text>
        <dbReference type="Rhea" id="RHEA:17473"/>
        <dbReference type="ChEBI" id="CHEBI:15377"/>
        <dbReference type="ChEBI" id="CHEBI:15378"/>
        <dbReference type="ChEBI" id="CHEBI:15740"/>
        <dbReference type="ChEBI" id="CHEBI:37565"/>
        <dbReference type="ChEBI" id="CHEBI:58462"/>
        <dbReference type="EC" id="3.5.4.16"/>
    </reaction>
</comment>
<comment type="pathway">
    <text evidence="1">Cofactor biosynthesis; 7,8-dihydroneopterin triphosphate biosynthesis; 7,8-dihydroneopterin triphosphate from GTP: step 1/1.</text>
</comment>
<comment type="similarity">
    <text evidence="1">Belongs to the GTP cyclohydrolase IV family.</text>
</comment>
<sequence length="269" mass="30143">MNQMNPAFVMPDVQSTVDTRQIPIQRVGVKAVRHPLTVCTESGDVQPTVGVWNLDVRLPADQKGTHMSRFVALLEENRAPLTVERFRAMLASMLVKLEAEAGRIEVTFPYFVNKTAPVSGVQSLLDYEVTLAGESRNGDTRLFLKVLVPVTSLCPCSKKISQYGAHNQRSHVTIDAELAADLPVEALIRIAEEEASCELWGLLKRPDEKFVTERAYENPKFVEDLVRDVAQRLDADERVVAYVLEAENFESIHNHSAYALIERDKRQAA</sequence>
<feature type="chain" id="PRO_0000289475" description="GTP cyclohydrolase FolE2 2">
    <location>
        <begin position="1"/>
        <end position="269"/>
    </location>
</feature>
<feature type="site" description="May be catalytically important" evidence="1">
    <location>
        <position position="154"/>
    </location>
</feature>
<name>GCH42_BURO1</name>
<evidence type="ECO:0000255" key="1">
    <source>
        <dbReference type="HAMAP-Rule" id="MF_01527"/>
    </source>
</evidence>
<keyword id="KW-0378">Hydrolase</keyword>